<keyword id="KW-0067">ATP-binding</keyword>
<keyword id="KW-0963">Cytoplasm</keyword>
<keyword id="KW-0460">Magnesium</keyword>
<keyword id="KW-0479">Metal-binding</keyword>
<keyword id="KW-0547">Nucleotide-binding</keyword>
<keyword id="KW-0554">One-carbon metabolism</keyword>
<keyword id="KW-0630">Potassium</keyword>
<keyword id="KW-1185">Reference proteome</keyword>
<keyword id="KW-0808">Transferase</keyword>
<reference key="1">
    <citation type="submission" date="2008-06" db="EMBL/GenBank/DDBJ databases">
        <title>Complete sequence of Pelodictyon phaeoclathratiforme BU-1.</title>
        <authorList>
            <consortium name="US DOE Joint Genome Institute"/>
            <person name="Lucas S."/>
            <person name="Copeland A."/>
            <person name="Lapidus A."/>
            <person name="Glavina del Rio T."/>
            <person name="Dalin E."/>
            <person name="Tice H."/>
            <person name="Bruce D."/>
            <person name="Goodwin L."/>
            <person name="Pitluck S."/>
            <person name="Schmutz J."/>
            <person name="Larimer F."/>
            <person name="Land M."/>
            <person name="Hauser L."/>
            <person name="Kyrpides N."/>
            <person name="Mikhailova N."/>
            <person name="Liu Z."/>
            <person name="Li T."/>
            <person name="Zhao F."/>
            <person name="Overmann J."/>
            <person name="Bryant D.A."/>
            <person name="Richardson P."/>
        </authorList>
    </citation>
    <scope>NUCLEOTIDE SEQUENCE [LARGE SCALE GENOMIC DNA]</scope>
    <source>
        <strain>DSM 5477 / BU-1</strain>
    </source>
</reference>
<organism>
    <name type="scientific">Pelodictyon phaeoclathratiforme (strain DSM 5477 / BU-1)</name>
    <dbReference type="NCBI Taxonomy" id="324925"/>
    <lineage>
        <taxon>Bacteria</taxon>
        <taxon>Pseudomonadati</taxon>
        <taxon>Chlorobiota</taxon>
        <taxon>Chlorobiia</taxon>
        <taxon>Chlorobiales</taxon>
        <taxon>Chlorobiaceae</taxon>
        <taxon>Chlorobium/Pelodictyon group</taxon>
        <taxon>Pelodictyon</taxon>
    </lineage>
</organism>
<name>METK_PELPB</name>
<feature type="chain" id="PRO_1000093068" description="S-adenosylmethionine synthase">
    <location>
        <begin position="1"/>
        <end position="404"/>
    </location>
</feature>
<feature type="region of interest" description="Flexible loop" evidence="1">
    <location>
        <begin position="101"/>
        <end position="111"/>
    </location>
</feature>
<feature type="binding site" description="in other chain" evidence="1">
    <location>
        <position position="17"/>
    </location>
    <ligand>
        <name>ATP</name>
        <dbReference type="ChEBI" id="CHEBI:30616"/>
        <note>ligand shared between two neighboring subunits</note>
    </ligand>
</feature>
<feature type="binding site" evidence="1">
    <location>
        <position position="19"/>
    </location>
    <ligand>
        <name>Mg(2+)</name>
        <dbReference type="ChEBI" id="CHEBI:18420"/>
    </ligand>
</feature>
<feature type="binding site" evidence="1">
    <location>
        <position position="45"/>
    </location>
    <ligand>
        <name>K(+)</name>
        <dbReference type="ChEBI" id="CHEBI:29103"/>
    </ligand>
</feature>
<feature type="binding site" description="in other chain" evidence="1">
    <location>
        <position position="58"/>
    </location>
    <ligand>
        <name>L-methionine</name>
        <dbReference type="ChEBI" id="CHEBI:57844"/>
        <note>ligand shared between two neighboring subunits</note>
    </ligand>
</feature>
<feature type="binding site" description="in other chain" evidence="1">
    <location>
        <position position="101"/>
    </location>
    <ligand>
        <name>L-methionine</name>
        <dbReference type="ChEBI" id="CHEBI:57844"/>
        <note>ligand shared between two neighboring subunits</note>
    </ligand>
</feature>
<feature type="binding site" description="in other chain" evidence="1">
    <location>
        <begin position="172"/>
        <end position="174"/>
    </location>
    <ligand>
        <name>ATP</name>
        <dbReference type="ChEBI" id="CHEBI:30616"/>
        <note>ligand shared between two neighboring subunits</note>
    </ligand>
</feature>
<feature type="binding site" description="in other chain" evidence="1">
    <location>
        <begin position="245"/>
        <end position="246"/>
    </location>
    <ligand>
        <name>ATP</name>
        <dbReference type="ChEBI" id="CHEBI:30616"/>
        <note>ligand shared between two neighboring subunits</note>
    </ligand>
</feature>
<feature type="binding site" evidence="1">
    <location>
        <position position="254"/>
    </location>
    <ligand>
        <name>ATP</name>
        <dbReference type="ChEBI" id="CHEBI:30616"/>
        <note>ligand shared between two neighboring subunits</note>
    </ligand>
</feature>
<feature type="binding site" evidence="1">
    <location>
        <position position="254"/>
    </location>
    <ligand>
        <name>L-methionine</name>
        <dbReference type="ChEBI" id="CHEBI:57844"/>
        <note>ligand shared between two neighboring subunits</note>
    </ligand>
</feature>
<feature type="binding site" description="in other chain" evidence="1">
    <location>
        <begin position="260"/>
        <end position="261"/>
    </location>
    <ligand>
        <name>ATP</name>
        <dbReference type="ChEBI" id="CHEBI:30616"/>
        <note>ligand shared between two neighboring subunits</note>
    </ligand>
</feature>
<feature type="binding site" evidence="1">
    <location>
        <position position="277"/>
    </location>
    <ligand>
        <name>ATP</name>
        <dbReference type="ChEBI" id="CHEBI:30616"/>
        <note>ligand shared between two neighboring subunits</note>
    </ligand>
</feature>
<feature type="binding site" evidence="1">
    <location>
        <position position="281"/>
    </location>
    <ligand>
        <name>ATP</name>
        <dbReference type="ChEBI" id="CHEBI:30616"/>
        <note>ligand shared between two neighboring subunits</note>
    </ligand>
</feature>
<feature type="binding site" description="in other chain" evidence="1">
    <location>
        <position position="285"/>
    </location>
    <ligand>
        <name>L-methionine</name>
        <dbReference type="ChEBI" id="CHEBI:57844"/>
        <note>ligand shared between two neighboring subunits</note>
    </ligand>
</feature>
<comment type="function">
    <text evidence="1">Catalyzes the formation of S-adenosylmethionine (AdoMet) from methionine and ATP. The overall synthetic reaction is composed of two sequential steps, AdoMet formation and the subsequent tripolyphosphate hydrolysis which occurs prior to release of AdoMet from the enzyme.</text>
</comment>
<comment type="catalytic activity">
    <reaction evidence="1">
        <text>L-methionine + ATP + H2O = S-adenosyl-L-methionine + phosphate + diphosphate</text>
        <dbReference type="Rhea" id="RHEA:21080"/>
        <dbReference type="ChEBI" id="CHEBI:15377"/>
        <dbReference type="ChEBI" id="CHEBI:30616"/>
        <dbReference type="ChEBI" id="CHEBI:33019"/>
        <dbReference type="ChEBI" id="CHEBI:43474"/>
        <dbReference type="ChEBI" id="CHEBI:57844"/>
        <dbReference type="ChEBI" id="CHEBI:59789"/>
        <dbReference type="EC" id="2.5.1.6"/>
    </reaction>
</comment>
<comment type="cofactor">
    <cofactor evidence="1">
        <name>Mg(2+)</name>
        <dbReference type="ChEBI" id="CHEBI:18420"/>
    </cofactor>
    <text evidence="1">Binds 2 divalent ions per subunit.</text>
</comment>
<comment type="cofactor">
    <cofactor evidence="1">
        <name>K(+)</name>
        <dbReference type="ChEBI" id="CHEBI:29103"/>
    </cofactor>
    <text evidence="1">Binds 1 potassium ion per subunit.</text>
</comment>
<comment type="pathway">
    <text evidence="1">Amino-acid biosynthesis; S-adenosyl-L-methionine biosynthesis; S-adenosyl-L-methionine from L-methionine: step 1/1.</text>
</comment>
<comment type="subunit">
    <text evidence="1">Homotetramer; dimer of dimers.</text>
</comment>
<comment type="subcellular location">
    <subcellularLocation>
        <location evidence="1">Cytoplasm</location>
    </subcellularLocation>
</comment>
<comment type="similarity">
    <text evidence="1">Belongs to the AdoMet synthase family.</text>
</comment>
<dbReference type="EC" id="2.5.1.6" evidence="1"/>
<dbReference type="EMBL" id="CP001110">
    <property type="protein sequence ID" value="ACF44301.1"/>
    <property type="molecule type" value="Genomic_DNA"/>
</dbReference>
<dbReference type="RefSeq" id="WP_012508780.1">
    <property type="nucleotide sequence ID" value="NC_011060.1"/>
</dbReference>
<dbReference type="SMR" id="B4SD42"/>
<dbReference type="STRING" id="324925.Ppha_2094"/>
<dbReference type="KEGG" id="pph:Ppha_2094"/>
<dbReference type="eggNOG" id="COG0192">
    <property type="taxonomic scope" value="Bacteria"/>
</dbReference>
<dbReference type="HOGENOM" id="CLU_041802_1_1_10"/>
<dbReference type="OrthoDB" id="9801686at2"/>
<dbReference type="UniPathway" id="UPA00315">
    <property type="reaction ID" value="UER00080"/>
</dbReference>
<dbReference type="Proteomes" id="UP000002724">
    <property type="component" value="Chromosome"/>
</dbReference>
<dbReference type="GO" id="GO:0005737">
    <property type="term" value="C:cytoplasm"/>
    <property type="evidence" value="ECO:0007669"/>
    <property type="project" value="UniProtKB-SubCell"/>
</dbReference>
<dbReference type="GO" id="GO:0005524">
    <property type="term" value="F:ATP binding"/>
    <property type="evidence" value="ECO:0007669"/>
    <property type="project" value="UniProtKB-UniRule"/>
</dbReference>
<dbReference type="GO" id="GO:0000287">
    <property type="term" value="F:magnesium ion binding"/>
    <property type="evidence" value="ECO:0007669"/>
    <property type="project" value="UniProtKB-UniRule"/>
</dbReference>
<dbReference type="GO" id="GO:0004478">
    <property type="term" value="F:methionine adenosyltransferase activity"/>
    <property type="evidence" value="ECO:0007669"/>
    <property type="project" value="UniProtKB-UniRule"/>
</dbReference>
<dbReference type="GO" id="GO:0006730">
    <property type="term" value="P:one-carbon metabolic process"/>
    <property type="evidence" value="ECO:0007669"/>
    <property type="project" value="UniProtKB-KW"/>
</dbReference>
<dbReference type="GO" id="GO:0006556">
    <property type="term" value="P:S-adenosylmethionine biosynthetic process"/>
    <property type="evidence" value="ECO:0007669"/>
    <property type="project" value="UniProtKB-UniRule"/>
</dbReference>
<dbReference type="CDD" id="cd18079">
    <property type="entry name" value="S-AdoMet_synt"/>
    <property type="match status" value="1"/>
</dbReference>
<dbReference type="FunFam" id="3.30.300.10:FF:000003">
    <property type="entry name" value="S-adenosylmethionine synthase"/>
    <property type="match status" value="1"/>
</dbReference>
<dbReference type="Gene3D" id="3.30.300.10">
    <property type="match status" value="3"/>
</dbReference>
<dbReference type="HAMAP" id="MF_00086">
    <property type="entry name" value="S_AdoMet_synth1"/>
    <property type="match status" value="1"/>
</dbReference>
<dbReference type="InterPro" id="IPR022631">
    <property type="entry name" value="ADOMET_SYNTHASE_CS"/>
</dbReference>
<dbReference type="InterPro" id="IPR022630">
    <property type="entry name" value="S-AdoMet_synt_C"/>
</dbReference>
<dbReference type="InterPro" id="IPR022629">
    <property type="entry name" value="S-AdoMet_synt_central"/>
</dbReference>
<dbReference type="InterPro" id="IPR022628">
    <property type="entry name" value="S-AdoMet_synt_N"/>
</dbReference>
<dbReference type="InterPro" id="IPR002133">
    <property type="entry name" value="S-AdoMet_synthetase"/>
</dbReference>
<dbReference type="InterPro" id="IPR022636">
    <property type="entry name" value="S-AdoMet_synthetase_sfam"/>
</dbReference>
<dbReference type="NCBIfam" id="TIGR01034">
    <property type="entry name" value="metK"/>
    <property type="match status" value="1"/>
</dbReference>
<dbReference type="PANTHER" id="PTHR11964">
    <property type="entry name" value="S-ADENOSYLMETHIONINE SYNTHETASE"/>
    <property type="match status" value="1"/>
</dbReference>
<dbReference type="Pfam" id="PF02773">
    <property type="entry name" value="S-AdoMet_synt_C"/>
    <property type="match status" value="1"/>
</dbReference>
<dbReference type="Pfam" id="PF02772">
    <property type="entry name" value="S-AdoMet_synt_M"/>
    <property type="match status" value="1"/>
</dbReference>
<dbReference type="Pfam" id="PF00438">
    <property type="entry name" value="S-AdoMet_synt_N"/>
    <property type="match status" value="1"/>
</dbReference>
<dbReference type="PIRSF" id="PIRSF000497">
    <property type="entry name" value="MAT"/>
    <property type="match status" value="1"/>
</dbReference>
<dbReference type="SUPFAM" id="SSF55973">
    <property type="entry name" value="S-adenosylmethionine synthetase"/>
    <property type="match status" value="3"/>
</dbReference>
<dbReference type="PROSITE" id="PS00376">
    <property type="entry name" value="ADOMET_SYNTHASE_1"/>
    <property type="match status" value="1"/>
</dbReference>
<dbReference type="PROSITE" id="PS00377">
    <property type="entry name" value="ADOMET_SYNTHASE_2"/>
    <property type="match status" value="1"/>
</dbReference>
<protein>
    <recommendedName>
        <fullName evidence="1">S-adenosylmethionine synthase</fullName>
        <shortName evidence="1">AdoMet synthase</shortName>
        <ecNumber evidence="1">2.5.1.6</ecNumber>
    </recommendedName>
    <alternativeName>
        <fullName evidence="1">MAT</fullName>
    </alternativeName>
    <alternativeName>
        <fullName evidence="1">Methionine adenosyltransferase</fullName>
    </alternativeName>
</protein>
<evidence type="ECO:0000255" key="1">
    <source>
        <dbReference type="HAMAP-Rule" id="MF_00086"/>
    </source>
</evidence>
<sequence>MSQTRYFFTSESVSEGHPDKVADQISDAVLDDFLRQDSSSRVACETFVTTGQVIVGGEVTTKGIVDIQTIARKVVTEIGYTKSEYMFEANSCGVLSALHSQSPDINRGVDRKEEIADEFDRVGAGDQGMMFGYACTETPVLMPAAIQFAQHLMKKLAEIRKEGKIMTYLRPDAKSQVTLEYENEVVKRVDAVVVSTQHDPEPEGVSEAAWQEVIKNDIIENVIKVVIPADLIDENTKFHINPTGRFVIGGPHGDTGLTGRKIIVDTYGGAAPHGGGAFSGKDPSKVDRSAAYAARHVAKNIVAAGLADKCTVQVSYAIGVARPVSIYINTHDTAKHGLNDAQIQEKAELIFDLRPAAIIKRFSLNKPEGWCYQQTAAYGHFGRDIFPWEKTEKVGELKSALNLA</sequence>
<proteinExistence type="inferred from homology"/>
<accession>B4SD42</accession>
<gene>
    <name evidence="1" type="primary">metK</name>
    <name type="ordered locus">Ppha_2094</name>
</gene>